<protein>
    <recommendedName>
        <fullName evidence="1">Histidinol-phosphate aminotransferase</fullName>
        <ecNumber evidence="1">2.6.1.9</ecNumber>
    </recommendedName>
    <alternativeName>
        <fullName evidence="1">Imidazole acetol-phosphate transaminase</fullName>
    </alternativeName>
</protein>
<keyword id="KW-0028">Amino-acid biosynthesis</keyword>
<keyword id="KW-0032">Aminotransferase</keyword>
<keyword id="KW-0368">Histidine biosynthesis</keyword>
<keyword id="KW-0663">Pyridoxal phosphate</keyword>
<keyword id="KW-0808">Transferase</keyword>
<proteinExistence type="inferred from homology"/>
<evidence type="ECO:0000255" key="1">
    <source>
        <dbReference type="HAMAP-Rule" id="MF_01023"/>
    </source>
</evidence>
<evidence type="ECO:0000256" key="2">
    <source>
        <dbReference type="SAM" id="MobiDB-lite"/>
    </source>
</evidence>
<accession>P61002</accession>
<dbReference type="EC" id="2.6.1.9" evidence="1"/>
<dbReference type="EMBL" id="BX572607">
    <property type="protein sequence ID" value="CAE29880.1"/>
    <property type="molecule type" value="Genomic_DNA"/>
</dbReference>
<dbReference type="RefSeq" id="WP_011159973.1">
    <property type="nucleotide sequence ID" value="NZ_CP116810.1"/>
</dbReference>
<dbReference type="SMR" id="P61002"/>
<dbReference type="STRING" id="258594.RPA4439"/>
<dbReference type="GeneID" id="66895580"/>
<dbReference type="eggNOG" id="COG0079">
    <property type="taxonomic scope" value="Bacteria"/>
</dbReference>
<dbReference type="HOGENOM" id="CLU_017584_3_3_5"/>
<dbReference type="PhylomeDB" id="P61002"/>
<dbReference type="UniPathway" id="UPA00031">
    <property type="reaction ID" value="UER00012"/>
</dbReference>
<dbReference type="GO" id="GO:0004400">
    <property type="term" value="F:histidinol-phosphate transaminase activity"/>
    <property type="evidence" value="ECO:0007669"/>
    <property type="project" value="UniProtKB-UniRule"/>
</dbReference>
<dbReference type="GO" id="GO:0030170">
    <property type="term" value="F:pyridoxal phosphate binding"/>
    <property type="evidence" value="ECO:0007669"/>
    <property type="project" value="InterPro"/>
</dbReference>
<dbReference type="GO" id="GO:0000105">
    <property type="term" value="P:L-histidine biosynthetic process"/>
    <property type="evidence" value="ECO:0007669"/>
    <property type="project" value="UniProtKB-UniRule"/>
</dbReference>
<dbReference type="CDD" id="cd00609">
    <property type="entry name" value="AAT_like"/>
    <property type="match status" value="1"/>
</dbReference>
<dbReference type="Gene3D" id="3.90.1150.10">
    <property type="entry name" value="Aspartate Aminotransferase, domain 1"/>
    <property type="match status" value="1"/>
</dbReference>
<dbReference type="Gene3D" id="3.40.640.10">
    <property type="entry name" value="Type I PLP-dependent aspartate aminotransferase-like (Major domain)"/>
    <property type="match status" value="1"/>
</dbReference>
<dbReference type="HAMAP" id="MF_01023">
    <property type="entry name" value="HisC_aminotrans_2"/>
    <property type="match status" value="1"/>
</dbReference>
<dbReference type="InterPro" id="IPR004839">
    <property type="entry name" value="Aminotransferase_I/II_large"/>
</dbReference>
<dbReference type="InterPro" id="IPR005861">
    <property type="entry name" value="HisP_aminotrans"/>
</dbReference>
<dbReference type="InterPro" id="IPR050106">
    <property type="entry name" value="HistidinolP_aminotransfase"/>
</dbReference>
<dbReference type="InterPro" id="IPR015424">
    <property type="entry name" value="PyrdxlP-dep_Trfase"/>
</dbReference>
<dbReference type="InterPro" id="IPR015421">
    <property type="entry name" value="PyrdxlP-dep_Trfase_major"/>
</dbReference>
<dbReference type="InterPro" id="IPR015422">
    <property type="entry name" value="PyrdxlP-dep_Trfase_small"/>
</dbReference>
<dbReference type="NCBIfam" id="TIGR01141">
    <property type="entry name" value="hisC"/>
    <property type="match status" value="1"/>
</dbReference>
<dbReference type="PANTHER" id="PTHR43643:SF3">
    <property type="entry name" value="HISTIDINOL-PHOSPHATE AMINOTRANSFERASE"/>
    <property type="match status" value="1"/>
</dbReference>
<dbReference type="PANTHER" id="PTHR43643">
    <property type="entry name" value="HISTIDINOL-PHOSPHATE AMINOTRANSFERASE 2"/>
    <property type="match status" value="1"/>
</dbReference>
<dbReference type="Pfam" id="PF00155">
    <property type="entry name" value="Aminotran_1_2"/>
    <property type="match status" value="1"/>
</dbReference>
<dbReference type="SUPFAM" id="SSF53383">
    <property type="entry name" value="PLP-dependent transferases"/>
    <property type="match status" value="1"/>
</dbReference>
<organism>
    <name type="scientific">Rhodopseudomonas palustris (strain ATCC BAA-98 / CGA009)</name>
    <dbReference type="NCBI Taxonomy" id="258594"/>
    <lineage>
        <taxon>Bacteria</taxon>
        <taxon>Pseudomonadati</taxon>
        <taxon>Pseudomonadota</taxon>
        <taxon>Alphaproteobacteria</taxon>
        <taxon>Hyphomicrobiales</taxon>
        <taxon>Nitrobacteraceae</taxon>
        <taxon>Rhodopseudomonas</taxon>
    </lineage>
</organism>
<name>HIS8_RHOPA</name>
<sequence>MSRPVPNPGILDIAPYTPGKSPVAEPGRKVFKLSANETPFGPSPHAIAAYKSAADHLEDYPEGTSRILREAIGKAYGLDPDRIICGAGSDEILNLLAHTYLAPGDEAISSQHGFLVYPIATLANGAKNVVAPEKNLTTDVDAMLAAVTPNTKLVWLANPNNPTGTYIPFDEVKRLRAGLPSHVVLVLDAAYADYVMKNDYELGIELVSTTENTVLTHTFSKVHGLAALRIGWMFGPANIVDAVNRIRGPFNVSVPAQLAAVAAIQDTGHVERSRAHTDKWRNTLAEELPKLGLTVTRSVCNFVLIHFPTTKGKTAAEADAFLTQRGLVLRALNNYGLPHALRMTIGTDEANALVLENLREFMGQP</sequence>
<reference key="1">
    <citation type="journal article" date="2004" name="Nat. Biotechnol.">
        <title>Complete genome sequence of the metabolically versatile photosynthetic bacterium Rhodopseudomonas palustris.</title>
        <authorList>
            <person name="Larimer F.W."/>
            <person name="Chain P."/>
            <person name="Hauser L."/>
            <person name="Lamerdin J.E."/>
            <person name="Malfatti S."/>
            <person name="Do L."/>
            <person name="Land M.L."/>
            <person name="Pelletier D.A."/>
            <person name="Beatty J.T."/>
            <person name="Lang A.S."/>
            <person name="Tabita F.R."/>
            <person name="Gibson J.L."/>
            <person name="Hanson T.E."/>
            <person name="Bobst C."/>
            <person name="Torres y Torres J.L."/>
            <person name="Peres C."/>
            <person name="Harrison F.H."/>
            <person name="Gibson J."/>
            <person name="Harwood C.S."/>
        </authorList>
    </citation>
    <scope>NUCLEOTIDE SEQUENCE [LARGE SCALE GENOMIC DNA]</scope>
    <source>
        <strain>ATCC BAA-98 / CGA009</strain>
    </source>
</reference>
<gene>
    <name evidence="1" type="primary">hisC</name>
    <name type="ordered locus">RPA4439</name>
</gene>
<comment type="catalytic activity">
    <reaction evidence="1">
        <text>L-histidinol phosphate + 2-oxoglutarate = 3-(imidazol-4-yl)-2-oxopropyl phosphate + L-glutamate</text>
        <dbReference type="Rhea" id="RHEA:23744"/>
        <dbReference type="ChEBI" id="CHEBI:16810"/>
        <dbReference type="ChEBI" id="CHEBI:29985"/>
        <dbReference type="ChEBI" id="CHEBI:57766"/>
        <dbReference type="ChEBI" id="CHEBI:57980"/>
        <dbReference type="EC" id="2.6.1.9"/>
    </reaction>
</comment>
<comment type="cofactor">
    <cofactor evidence="1">
        <name>pyridoxal 5'-phosphate</name>
        <dbReference type="ChEBI" id="CHEBI:597326"/>
    </cofactor>
</comment>
<comment type="pathway">
    <text evidence="1">Amino-acid biosynthesis; L-histidine biosynthesis; L-histidine from 5-phospho-alpha-D-ribose 1-diphosphate: step 7/9.</text>
</comment>
<comment type="subunit">
    <text evidence="1">Homodimer.</text>
</comment>
<comment type="similarity">
    <text evidence="1">Belongs to the class-II pyridoxal-phosphate-dependent aminotransferase family. Histidinol-phosphate aminotransferase subfamily.</text>
</comment>
<feature type="chain" id="PRO_0000153440" description="Histidinol-phosphate aminotransferase">
    <location>
        <begin position="1"/>
        <end position="365"/>
    </location>
</feature>
<feature type="region of interest" description="Disordered" evidence="2">
    <location>
        <begin position="1"/>
        <end position="21"/>
    </location>
</feature>
<feature type="modified residue" description="N6-(pyridoxal phosphate)lysine" evidence="1">
    <location>
        <position position="221"/>
    </location>
</feature>